<comment type="subcellular location">
    <subcellularLocation>
        <location evidence="3">Cell membrane</location>
        <topology evidence="3">Lipid-anchor</topology>
    </subcellularLocation>
</comment>
<evidence type="ECO:0000255" key="1">
    <source>
        <dbReference type="PROSITE-ProRule" id="PRU00303"/>
    </source>
</evidence>
<evidence type="ECO:0000256" key="2">
    <source>
        <dbReference type="SAM" id="MobiDB-lite"/>
    </source>
</evidence>
<evidence type="ECO:0000305" key="3"/>
<gene>
    <name type="primary">envF</name>
    <name type="ordered locus">STM1240</name>
</gene>
<reference key="1">
    <citation type="journal article" date="1995" name="J. Bacteriol.">
        <title>Characterization of the Salmonella typhimurium pagC/pagD chromosomal region.</title>
        <authorList>
            <person name="Gunn J.S."/>
            <person name="Alpuche-Aranda C.M."/>
            <person name="Loomis W.P."/>
            <person name="Belden W.J."/>
            <person name="Miller S.I."/>
        </authorList>
    </citation>
    <scope>NUCLEOTIDE SEQUENCE [GENOMIC DNA]</scope>
    <source>
        <strain>ATCC 14028 / SGSG 2980 / CDC 6516-60 / NCTC 12023</strain>
    </source>
</reference>
<reference key="2">
    <citation type="journal article" date="2001" name="Nature">
        <title>Complete genome sequence of Salmonella enterica serovar Typhimurium LT2.</title>
        <authorList>
            <person name="McClelland M."/>
            <person name="Sanderson K.E."/>
            <person name="Spieth J."/>
            <person name="Clifton S.W."/>
            <person name="Latreille P."/>
            <person name="Courtney L."/>
            <person name="Porwollik S."/>
            <person name="Ali J."/>
            <person name="Dante M."/>
            <person name="Du F."/>
            <person name="Hou S."/>
            <person name="Layman D."/>
            <person name="Leonard S."/>
            <person name="Nguyen C."/>
            <person name="Scott K."/>
            <person name="Holmes A."/>
            <person name="Grewal N."/>
            <person name="Mulvaney E."/>
            <person name="Ryan E."/>
            <person name="Sun H."/>
            <person name="Florea L."/>
            <person name="Miller W."/>
            <person name="Stoneking T."/>
            <person name="Nhan M."/>
            <person name="Waterston R."/>
            <person name="Wilson R.K."/>
        </authorList>
    </citation>
    <scope>NUCLEOTIDE SEQUENCE [LARGE SCALE GENOMIC DNA]</scope>
    <source>
        <strain>LT2 / SGSC1412 / ATCC 700720</strain>
    </source>
</reference>
<keyword id="KW-1003">Cell membrane</keyword>
<keyword id="KW-0449">Lipoprotein</keyword>
<keyword id="KW-0472">Membrane</keyword>
<keyword id="KW-0564">Palmitate</keyword>
<keyword id="KW-1185">Reference proteome</keyword>
<keyword id="KW-0732">Signal</keyword>
<protein>
    <recommendedName>
        <fullName>Probable lipoprotein EnvF</fullName>
    </recommendedName>
</protein>
<name>ENVF_SALTY</name>
<accession>Q56032</accession>
<feature type="signal peptide" evidence="1">
    <location>
        <begin position="1"/>
        <end position="25"/>
    </location>
</feature>
<feature type="chain" id="PRO_0000018172" description="Probable lipoprotein EnvF">
    <location>
        <begin position="26"/>
        <end position="262"/>
    </location>
</feature>
<feature type="region of interest" description="Disordered" evidence="2">
    <location>
        <begin position="227"/>
        <end position="262"/>
    </location>
</feature>
<feature type="compositionally biased region" description="Basic and acidic residues" evidence="2">
    <location>
        <begin position="237"/>
        <end position="246"/>
    </location>
</feature>
<feature type="lipid moiety-binding region" description="N-palmitoyl cysteine" evidence="1">
    <location>
        <position position="26"/>
    </location>
</feature>
<feature type="lipid moiety-binding region" description="S-diacylglycerol cysteine" evidence="1">
    <location>
        <position position="26"/>
    </location>
</feature>
<feature type="sequence conflict" description="In Ref. 1; AAA82997." evidence="3" ref="1">
    <original>D</original>
    <variation>A</variation>
    <location>
        <position position="223"/>
    </location>
</feature>
<feature type="sequence conflict" description="In Ref. 1; AAA82997." evidence="3" ref="1">
    <original>QRKKAAGKMNEIQQTFKK</original>
    <variation>PA</variation>
    <location>
        <begin position="245"/>
        <end position="262"/>
    </location>
</feature>
<proteinExistence type="inferred from homology"/>
<organism>
    <name type="scientific">Salmonella typhimurium (strain LT2 / SGSC1412 / ATCC 700720)</name>
    <dbReference type="NCBI Taxonomy" id="99287"/>
    <lineage>
        <taxon>Bacteria</taxon>
        <taxon>Pseudomonadati</taxon>
        <taxon>Pseudomonadota</taxon>
        <taxon>Gammaproteobacteria</taxon>
        <taxon>Enterobacterales</taxon>
        <taxon>Enterobacteriaceae</taxon>
        <taxon>Salmonella</taxon>
    </lineage>
</organism>
<dbReference type="EMBL" id="U31849">
    <property type="protein sequence ID" value="AAA82997.1"/>
    <property type="molecule type" value="Genomic_DNA"/>
</dbReference>
<dbReference type="EMBL" id="AE006468">
    <property type="protein sequence ID" value="AAL20169.1"/>
    <property type="molecule type" value="Genomic_DNA"/>
</dbReference>
<dbReference type="RefSeq" id="NP_460210.1">
    <property type="nucleotide sequence ID" value="NC_003197.2"/>
</dbReference>
<dbReference type="RefSeq" id="WP_001033408.1">
    <property type="nucleotide sequence ID" value="NC_003197.2"/>
</dbReference>
<dbReference type="STRING" id="99287.STM1240"/>
<dbReference type="PaxDb" id="99287-STM1240"/>
<dbReference type="GeneID" id="1252758"/>
<dbReference type="KEGG" id="stm:STM1240"/>
<dbReference type="PATRIC" id="fig|99287.12.peg.1312"/>
<dbReference type="HOGENOM" id="CLU_1030106_0_0_6"/>
<dbReference type="BioCyc" id="SENT99287:STM1240-MONOMER"/>
<dbReference type="Proteomes" id="UP000001014">
    <property type="component" value="Chromosome"/>
</dbReference>
<dbReference type="GO" id="GO:0005886">
    <property type="term" value="C:plasma membrane"/>
    <property type="evidence" value="ECO:0007669"/>
    <property type="project" value="UniProtKB-SubCell"/>
</dbReference>
<dbReference type="PROSITE" id="PS51257">
    <property type="entry name" value="PROKAR_LIPOPROTEIN"/>
    <property type="match status" value="1"/>
</dbReference>
<sequence length="262" mass="29572">MNKIHVTYKNLLLPITFIAATLISACDNDKDAMAEAEKNQEKYMQKIQQKEHQQSMFFYDKAEMQKAIANINAKGGANLAIIEVRFFKGGYSFIRQSVNTPAKVEVFKFNNGYWGGPSPVNLTIFGTITEEQKQEALKEALFKFDSINFSIIPERIQETIKRANASGIISVTEDSDIVVRAEIAHNGEFVYDITITAKNTARAVMTLNKDGSIAGYEIKEPFDPKKEAEKAQQLVEQSRKDIESQRKKAAGKMNEIQQTFKK</sequence>